<protein>
    <recommendedName>
        <fullName evidence="1">Phosphoglycerate kinase</fullName>
        <ecNumber evidence="1">2.7.2.3</ecNumber>
    </recommendedName>
</protein>
<gene>
    <name evidence="1" type="primary">pgk</name>
    <name type="ordered locus">Mmwyl1_4317</name>
</gene>
<reference key="1">
    <citation type="submission" date="2007-06" db="EMBL/GenBank/DDBJ databases">
        <title>Complete sequence of Marinomonas sp. MWYL1.</title>
        <authorList>
            <consortium name="US DOE Joint Genome Institute"/>
            <person name="Copeland A."/>
            <person name="Lucas S."/>
            <person name="Lapidus A."/>
            <person name="Barry K."/>
            <person name="Glavina del Rio T."/>
            <person name="Dalin E."/>
            <person name="Tice H."/>
            <person name="Pitluck S."/>
            <person name="Kiss H."/>
            <person name="Brettin T."/>
            <person name="Bruce D."/>
            <person name="Detter J.C."/>
            <person name="Han C."/>
            <person name="Schmutz J."/>
            <person name="Larimer F."/>
            <person name="Land M."/>
            <person name="Hauser L."/>
            <person name="Kyrpides N."/>
            <person name="Kim E."/>
            <person name="Johnston A.W.B."/>
            <person name="Todd J.D."/>
            <person name="Rogers R."/>
            <person name="Wexler M."/>
            <person name="Bond P.L."/>
            <person name="Li Y."/>
            <person name="Richardson P."/>
        </authorList>
    </citation>
    <scope>NUCLEOTIDE SEQUENCE [LARGE SCALE GENOMIC DNA]</scope>
    <source>
        <strain>MWYL1</strain>
    </source>
</reference>
<comment type="catalytic activity">
    <reaction evidence="1">
        <text>(2R)-3-phosphoglycerate + ATP = (2R)-3-phospho-glyceroyl phosphate + ADP</text>
        <dbReference type="Rhea" id="RHEA:14801"/>
        <dbReference type="ChEBI" id="CHEBI:30616"/>
        <dbReference type="ChEBI" id="CHEBI:57604"/>
        <dbReference type="ChEBI" id="CHEBI:58272"/>
        <dbReference type="ChEBI" id="CHEBI:456216"/>
        <dbReference type="EC" id="2.7.2.3"/>
    </reaction>
</comment>
<comment type="pathway">
    <text evidence="1">Carbohydrate degradation; glycolysis; pyruvate from D-glyceraldehyde 3-phosphate: step 2/5.</text>
</comment>
<comment type="subunit">
    <text evidence="1">Monomer.</text>
</comment>
<comment type="subcellular location">
    <subcellularLocation>
        <location evidence="1">Cytoplasm</location>
    </subcellularLocation>
</comment>
<comment type="similarity">
    <text evidence="1">Belongs to the phosphoglycerate kinase family.</text>
</comment>
<evidence type="ECO:0000255" key="1">
    <source>
        <dbReference type="HAMAP-Rule" id="MF_00145"/>
    </source>
</evidence>
<accession>A6W3D3</accession>
<feature type="chain" id="PRO_1000076592" description="Phosphoglycerate kinase">
    <location>
        <begin position="1"/>
        <end position="387"/>
    </location>
</feature>
<feature type="binding site" evidence="1">
    <location>
        <begin position="21"/>
        <end position="23"/>
    </location>
    <ligand>
        <name>substrate</name>
    </ligand>
</feature>
<feature type="binding site" evidence="1">
    <location>
        <position position="36"/>
    </location>
    <ligand>
        <name>substrate</name>
    </ligand>
</feature>
<feature type="binding site" evidence="1">
    <location>
        <begin position="59"/>
        <end position="62"/>
    </location>
    <ligand>
        <name>substrate</name>
    </ligand>
</feature>
<feature type="binding site" evidence="1">
    <location>
        <position position="113"/>
    </location>
    <ligand>
        <name>substrate</name>
    </ligand>
</feature>
<feature type="binding site" evidence="1">
    <location>
        <position position="146"/>
    </location>
    <ligand>
        <name>substrate</name>
    </ligand>
</feature>
<feature type="binding site" evidence="1">
    <location>
        <position position="197"/>
    </location>
    <ligand>
        <name>ATP</name>
        <dbReference type="ChEBI" id="CHEBI:30616"/>
    </ligand>
</feature>
<feature type="binding site" evidence="1">
    <location>
        <position position="314"/>
    </location>
    <ligand>
        <name>ATP</name>
        <dbReference type="ChEBI" id="CHEBI:30616"/>
    </ligand>
</feature>
<feature type="binding site" evidence="1">
    <location>
        <begin position="340"/>
        <end position="343"/>
    </location>
    <ligand>
        <name>ATP</name>
        <dbReference type="ChEBI" id="CHEBI:30616"/>
    </ligand>
</feature>
<name>PGK_MARMS</name>
<proteinExistence type="inferred from homology"/>
<organism>
    <name type="scientific">Marinomonas sp. (strain MWYL1)</name>
    <dbReference type="NCBI Taxonomy" id="400668"/>
    <lineage>
        <taxon>Bacteria</taxon>
        <taxon>Pseudomonadati</taxon>
        <taxon>Pseudomonadota</taxon>
        <taxon>Gammaproteobacteria</taxon>
        <taxon>Oceanospirillales</taxon>
        <taxon>Oceanospirillaceae</taxon>
        <taxon>Marinomonas</taxon>
    </lineage>
</organism>
<dbReference type="EC" id="2.7.2.3" evidence="1"/>
<dbReference type="EMBL" id="CP000749">
    <property type="protein sequence ID" value="ABR73212.1"/>
    <property type="molecule type" value="Genomic_DNA"/>
</dbReference>
<dbReference type="SMR" id="A6W3D3"/>
<dbReference type="STRING" id="400668.Mmwyl1_4317"/>
<dbReference type="KEGG" id="mmw:Mmwyl1_4317"/>
<dbReference type="eggNOG" id="COG0126">
    <property type="taxonomic scope" value="Bacteria"/>
</dbReference>
<dbReference type="HOGENOM" id="CLU_025427_0_2_6"/>
<dbReference type="OrthoDB" id="9808460at2"/>
<dbReference type="UniPathway" id="UPA00109">
    <property type="reaction ID" value="UER00185"/>
</dbReference>
<dbReference type="GO" id="GO:0005829">
    <property type="term" value="C:cytosol"/>
    <property type="evidence" value="ECO:0007669"/>
    <property type="project" value="TreeGrafter"/>
</dbReference>
<dbReference type="GO" id="GO:0043531">
    <property type="term" value="F:ADP binding"/>
    <property type="evidence" value="ECO:0007669"/>
    <property type="project" value="TreeGrafter"/>
</dbReference>
<dbReference type="GO" id="GO:0005524">
    <property type="term" value="F:ATP binding"/>
    <property type="evidence" value="ECO:0007669"/>
    <property type="project" value="UniProtKB-KW"/>
</dbReference>
<dbReference type="GO" id="GO:0004618">
    <property type="term" value="F:phosphoglycerate kinase activity"/>
    <property type="evidence" value="ECO:0007669"/>
    <property type="project" value="UniProtKB-UniRule"/>
</dbReference>
<dbReference type="GO" id="GO:0006094">
    <property type="term" value="P:gluconeogenesis"/>
    <property type="evidence" value="ECO:0007669"/>
    <property type="project" value="TreeGrafter"/>
</dbReference>
<dbReference type="GO" id="GO:0006096">
    <property type="term" value="P:glycolytic process"/>
    <property type="evidence" value="ECO:0007669"/>
    <property type="project" value="UniProtKB-UniRule"/>
</dbReference>
<dbReference type="FunFam" id="3.40.50.1260:FF:000006">
    <property type="entry name" value="Phosphoglycerate kinase"/>
    <property type="match status" value="1"/>
</dbReference>
<dbReference type="FunFam" id="3.40.50.1260:FF:000031">
    <property type="entry name" value="Phosphoglycerate kinase 1"/>
    <property type="match status" value="1"/>
</dbReference>
<dbReference type="Gene3D" id="3.40.50.1260">
    <property type="entry name" value="Phosphoglycerate kinase, N-terminal domain"/>
    <property type="match status" value="2"/>
</dbReference>
<dbReference type="HAMAP" id="MF_00145">
    <property type="entry name" value="Phosphoglyc_kinase"/>
    <property type="match status" value="1"/>
</dbReference>
<dbReference type="InterPro" id="IPR001576">
    <property type="entry name" value="Phosphoglycerate_kinase"/>
</dbReference>
<dbReference type="InterPro" id="IPR015911">
    <property type="entry name" value="Phosphoglycerate_kinase_CS"/>
</dbReference>
<dbReference type="InterPro" id="IPR015824">
    <property type="entry name" value="Phosphoglycerate_kinase_N"/>
</dbReference>
<dbReference type="InterPro" id="IPR036043">
    <property type="entry name" value="Phosphoglycerate_kinase_sf"/>
</dbReference>
<dbReference type="PANTHER" id="PTHR11406">
    <property type="entry name" value="PHOSPHOGLYCERATE KINASE"/>
    <property type="match status" value="1"/>
</dbReference>
<dbReference type="PANTHER" id="PTHR11406:SF23">
    <property type="entry name" value="PHOSPHOGLYCERATE KINASE 1, CHLOROPLASTIC-RELATED"/>
    <property type="match status" value="1"/>
</dbReference>
<dbReference type="Pfam" id="PF00162">
    <property type="entry name" value="PGK"/>
    <property type="match status" value="1"/>
</dbReference>
<dbReference type="PIRSF" id="PIRSF000724">
    <property type="entry name" value="Pgk"/>
    <property type="match status" value="1"/>
</dbReference>
<dbReference type="PRINTS" id="PR00477">
    <property type="entry name" value="PHGLYCKINASE"/>
</dbReference>
<dbReference type="SUPFAM" id="SSF53748">
    <property type="entry name" value="Phosphoglycerate kinase"/>
    <property type="match status" value="1"/>
</dbReference>
<dbReference type="PROSITE" id="PS00111">
    <property type="entry name" value="PGLYCERATE_KINASE"/>
    <property type="match status" value="1"/>
</dbReference>
<keyword id="KW-0067">ATP-binding</keyword>
<keyword id="KW-0963">Cytoplasm</keyword>
<keyword id="KW-0324">Glycolysis</keyword>
<keyword id="KW-0418">Kinase</keyword>
<keyword id="KW-0547">Nucleotide-binding</keyword>
<keyword id="KW-0808">Transferase</keyword>
<sequence length="387" mass="40449">MTVINMKDVDLANKRVLIREDLNVPVKDGKVTSDARIRAALPTIKMALEAGAKVMVMSHLGRPTEGQYEEEYSLQPVATHIAGLLGQDVPLVKDWLDGVEVESGQLVLVENVRFNLGEKKDDEALSKKMAALCDVFVMDAFGTAHRAQASTHGVAKFAPIACAGPLLSAELEALEKALAKPARPMAAIVGGSKVSTKLTVLESLSDKVDQLIVGGGIANTFLAAAGFPVGKSLYEEDLIPQAKALMAKTSIPLPEDVVVATAFAPDAVATVKDAADVGPDDMILDIGPKAAAAFAALLEESQTIIWNGPVGVFEFDQFGGGTKALAMAIANSKGFSIAGGGDTLAAVDKYDIADQVSYISTGGGAFLEFVEGKVLPAVAMLESRAQN</sequence>